<keyword id="KW-1185">Reference proteome</keyword>
<keyword id="KW-0687">Ribonucleoprotein</keyword>
<keyword id="KW-0689">Ribosomal protein</keyword>
<name>RL27_BRUA2</name>
<feature type="chain" id="PRO_1000017423" description="Large ribosomal subunit protein bL27">
    <location>
        <begin position="1"/>
        <end position="89"/>
    </location>
</feature>
<feature type="region of interest" description="Disordered" evidence="2">
    <location>
        <begin position="1"/>
        <end position="22"/>
    </location>
</feature>
<gene>
    <name evidence="1" type="primary">rpmA</name>
    <name type="ordered locus">BAB1_1857</name>
</gene>
<sequence length="89" mass="9377">MAHKKAGGSSRNGRDSESKRLGVKKFGGEAVLAGNIIVRQRGTKWHPGANVGLGKDHTIFATVNGSVSFRTKANGRTYVSVNPIAEAAE</sequence>
<organism>
    <name type="scientific">Brucella abortus (strain 2308)</name>
    <dbReference type="NCBI Taxonomy" id="359391"/>
    <lineage>
        <taxon>Bacteria</taxon>
        <taxon>Pseudomonadati</taxon>
        <taxon>Pseudomonadota</taxon>
        <taxon>Alphaproteobacteria</taxon>
        <taxon>Hyphomicrobiales</taxon>
        <taxon>Brucellaceae</taxon>
        <taxon>Brucella/Ochrobactrum group</taxon>
        <taxon>Brucella</taxon>
    </lineage>
</organism>
<comment type="similarity">
    <text evidence="1">Belongs to the bacterial ribosomal protein bL27 family.</text>
</comment>
<proteinExistence type="inferred from homology"/>
<evidence type="ECO:0000255" key="1">
    <source>
        <dbReference type="HAMAP-Rule" id="MF_00539"/>
    </source>
</evidence>
<evidence type="ECO:0000256" key="2">
    <source>
        <dbReference type="SAM" id="MobiDB-lite"/>
    </source>
</evidence>
<evidence type="ECO:0000305" key="3"/>
<reference key="1">
    <citation type="journal article" date="2005" name="Infect. Immun.">
        <title>Whole-genome analyses of speciation events in pathogenic Brucellae.</title>
        <authorList>
            <person name="Chain P.S."/>
            <person name="Comerci D.J."/>
            <person name="Tolmasky M.E."/>
            <person name="Larimer F.W."/>
            <person name="Malfatti S.A."/>
            <person name="Vergez L.M."/>
            <person name="Aguero F."/>
            <person name="Land M.L."/>
            <person name="Ugalde R.A."/>
            <person name="Garcia E."/>
        </authorList>
    </citation>
    <scope>NUCLEOTIDE SEQUENCE [LARGE SCALE GENOMIC DNA]</scope>
    <source>
        <strain>2308</strain>
    </source>
</reference>
<dbReference type="EMBL" id="AM040264">
    <property type="protein sequence ID" value="CAJ11813.1"/>
    <property type="molecule type" value="Genomic_DNA"/>
</dbReference>
<dbReference type="RefSeq" id="WP_002964927.1">
    <property type="nucleotide sequence ID" value="NZ_KN046823.1"/>
</dbReference>
<dbReference type="SMR" id="Q2YLL8"/>
<dbReference type="STRING" id="359391.BAB1_1857"/>
<dbReference type="GeneID" id="93017814"/>
<dbReference type="KEGG" id="bmf:BAB1_1857"/>
<dbReference type="PATRIC" id="fig|359391.11.peg.372"/>
<dbReference type="HOGENOM" id="CLU_095424_4_1_5"/>
<dbReference type="Proteomes" id="UP000002719">
    <property type="component" value="Chromosome I"/>
</dbReference>
<dbReference type="GO" id="GO:0022625">
    <property type="term" value="C:cytosolic large ribosomal subunit"/>
    <property type="evidence" value="ECO:0007669"/>
    <property type="project" value="TreeGrafter"/>
</dbReference>
<dbReference type="GO" id="GO:0003735">
    <property type="term" value="F:structural constituent of ribosome"/>
    <property type="evidence" value="ECO:0007669"/>
    <property type="project" value="InterPro"/>
</dbReference>
<dbReference type="GO" id="GO:0006412">
    <property type="term" value="P:translation"/>
    <property type="evidence" value="ECO:0007669"/>
    <property type="project" value="UniProtKB-UniRule"/>
</dbReference>
<dbReference type="FunFam" id="2.40.50.100:FF:000020">
    <property type="entry name" value="50S ribosomal protein L27"/>
    <property type="match status" value="1"/>
</dbReference>
<dbReference type="Gene3D" id="2.40.50.100">
    <property type="match status" value="1"/>
</dbReference>
<dbReference type="HAMAP" id="MF_00539">
    <property type="entry name" value="Ribosomal_bL27"/>
    <property type="match status" value="1"/>
</dbReference>
<dbReference type="InterPro" id="IPR001684">
    <property type="entry name" value="Ribosomal_bL27"/>
</dbReference>
<dbReference type="InterPro" id="IPR018261">
    <property type="entry name" value="Ribosomal_bL27_CS"/>
</dbReference>
<dbReference type="NCBIfam" id="TIGR00062">
    <property type="entry name" value="L27"/>
    <property type="match status" value="1"/>
</dbReference>
<dbReference type="PANTHER" id="PTHR15893:SF0">
    <property type="entry name" value="LARGE RIBOSOMAL SUBUNIT PROTEIN BL27M"/>
    <property type="match status" value="1"/>
</dbReference>
<dbReference type="PANTHER" id="PTHR15893">
    <property type="entry name" value="RIBOSOMAL PROTEIN L27"/>
    <property type="match status" value="1"/>
</dbReference>
<dbReference type="Pfam" id="PF01016">
    <property type="entry name" value="Ribosomal_L27"/>
    <property type="match status" value="1"/>
</dbReference>
<dbReference type="PRINTS" id="PR00063">
    <property type="entry name" value="RIBOSOMALL27"/>
</dbReference>
<dbReference type="SUPFAM" id="SSF110324">
    <property type="entry name" value="Ribosomal L27 protein-like"/>
    <property type="match status" value="1"/>
</dbReference>
<dbReference type="PROSITE" id="PS00831">
    <property type="entry name" value="RIBOSOMAL_L27"/>
    <property type="match status" value="1"/>
</dbReference>
<protein>
    <recommendedName>
        <fullName evidence="1">Large ribosomal subunit protein bL27</fullName>
    </recommendedName>
    <alternativeName>
        <fullName evidence="3">50S ribosomal protein L27</fullName>
    </alternativeName>
</protein>
<accession>Q2YLL8</accession>